<feature type="peptide" id="PRO_0000044377" description="Trypsin inhibitor 4">
    <location>
        <begin position="1"/>
        <end position="30"/>
    </location>
</feature>
<feature type="site" description="Reactive bond">
    <location>
        <begin position="5"/>
        <end position="6"/>
    </location>
</feature>
<feature type="disulfide bond" evidence="1">
    <location>
        <begin position="3"/>
        <end position="20"/>
    </location>
</feature>
<feature type="disulfide bond" evidence="1">
    <location>
        <begin position="10"/>
        <end position="22"/>
    </location>
</feature>
<feature type="disulfide bond" evidence="1">
    <location>
        <begin position="16"/>
        <end position="29"/>
    </location>
</feature>
<protein>
    <recommendedName>
        <fullName>Trypsin inhibitor 4</fullName>
    </recommendedName>
    <alternativeName>
        <fullName>CSTI-IV</fullName>
    </alternativeName>
    <alternativeName>
        <fullName>Trypsin inhibitor IV</fullName>
    </alternativeName>
</protein>
<name>ITR4_CUCSA</name>
<organism>
    <name type="scientific">Cucumis sativus</name>
    <name type="common">Cucumber</name>
    <dbReference type="NCBI Taxonomy" id="3659"/>
    <lineage>
        <taxon>Eukaryota</taxon>
        <taxon>Viridiplantae</taxon>
        <taxon>Streptophyta</taxon>
        <taxon>Embryophyta</taxon>
        <taxon>Tracheophyta</taxon>
        <taxon>Spermatophyta</taxon>
        <taxon>Magnoliopsida</taxon>
        <taxon>eudicotyledons</taxon>
        <taxon>Gunneridae</taxon>
        <taxon>Pentapetalae</taxon>
        <taxon>rosids</taxon>
        <taxon>fabids</taxon>
        <taxon>Cucurbitales</taxon>
        <taxon>Cucurbitaceae</taxon>
        <taxon>Benincaseae</taxon>
        <taxon>Cucumis</taxon>
    </lineage>
</organism>
<accession>P10292</accession>
<proteinExistence type="evidence at protein level"/>
<reference key="1">
    <citation type="journal article" date="1985" name="Biochem. Biophys. Res. Commun.">
        <title>The squash family of serine proteinase inhibitors. Amino acid sequences and association equilibrium constants of inhibitors from squash, summer squash, zucchini, and cucumber seeds.</title>
        <authorList>
            <person name="Wieczorek M."/>
            <person name="Otlewski J."/>
            <person name="Cook J."/>
            <person name="Parks K."/>
            <person name="Leluk J."/>
            <person name="Wilimowska-Pelc A."/>
            <person name="Polanowski A."/>
            <person name="Wilusz T."/>
            <person name="Laskowski M. Jr."/>
        </authorList>
    </citation>
    <scope>PROTEIN SEQUENCE</scope>
    <source>
        <tissue>Seed</tissue>
    </source>
</reference>
<evidence type="ECO:0000250" key="1"/>
<evidence type="ECO:0000305" key="2"/>
<dbReference type="SMR" id="P10292"/>
<dbReference type="MEROPS" id="I07.015"/>
<dbReference type="GO" id="GO:0005576">
    <property type="term" value="C:extracellular region"/>
    <property type="evidence" value="ECO:0007669"/>
    <property type="project" value="UniProtKB-SubCell"/>
</dbReference>
<dbReference type="GO" id="GO:0004867">
    <property type="term" value="F:serine-type endopeptidase inhibitor activity"/>
    <property type="evidence" value="ECO:0007669"/>
    <property type="project" value="UniProtKB-KW"/>
</dbReference>
<dbReference type="CDD" id="cd00150">
    <property type="entry name" value="PlantTI"/>
    <property type="match status" value="1"/>
</dbReference>
<dbReference type="Gene3D" id="4.10.75.20">
    <property type="match status" value="1"/>
</dbReference>
<dbReference type="InterPro" id="IPR000737">
    <property type="entry name" value="Prot_inh_squash"/>
</dbReference>
<dbReference type="InterPro" id="IPR011052">
    <property type="entry name" value="Proteinase_amylase_inhib_sf"/>
</dbReference>
<dbReference type="Pfam" id="PF00299">
    <property type="entry name" value="Squash"/>
    <property type="match status" value="1"/>
</dbReference>
<dbReference type="PRINTS" id="PR00293">
    <property type="entry name" value="SQUASHINHBTR"/>
</dbReference>
<dbReference type="SMART" id="SM00286">
    <property type="entry name" value="PTI"/>
    <property type="match status" value="1"/>
</dbReference>
<dbReference type="SUPFAM" id="SSF57027">
    <property type="entry name" value="Plant inhibitors of proteinases and amylases"/>
    <property type="match status" value="1"/>
</dbReference>
<dbReference type="PROSITE" id="PS00286">
    <property type="entry name" value="SQUASH_INHIBITOR"/>
    <property type="match status" value="1"/>
</dbReference>
<sequence length="30" mass="3429">MMCPRILMKCKHDSDCLPGCVCLEHIEYCG</sequence>
<keyword id="KW-0903">Direct protein sequencing</keyword>
<keyword id="KW-1015">Disulfide bond</keyword>
<keyword id="KW-0960">Knottin</keyword>
<keyword id="KW-0646">Protease inhibitor</keyword>
<keyword id="KW-0964">Secreted</keyword>
<keyword id="KW-0722">Serine protease inhibitor</keyword>
<comment type="function">
    <text>Inhibits trypsin.</text>
</comment>
<comment type="subcellular location">
    <subcellularLocation>
        <location>Secreted</location>
    </subcellularLocation>
</comment>
<comment type="domain">
    <text evidence="1">The presence of a 'disulfide through disulfide knot' structurally defines this protein as a knottin.</text>
</comment>
<comment type="similarity">
    <text evidence="2">Belongs to the protease inhibitor I7 (squash-type serine protease inhibitor) family.</text>
</comment>